<keyword id="KW-0067">ATP-binding</keyword>
<keyword id="KW-0436">Ligase</keyword>
<keyword id="KW-0547">Nucleotide-binding</keyword>
<keyword id="KW-0658">Purine biosynthesis</keyword>
<keyword id="KW-1185">Reference proteome</keyword>
<accession>C0ZKC3</accession>
<comment type="catalytic activity">
    <reaction evidence="1">
        <text>5-amino-1-(5-phospho-D-ribosyl)imidazole-4-carboxylate + L-aspartate + ATP = (2S)-2-[5-amino-1-(5-phospho-beta-D-ribosyl)imidazole-4-carboxamido]succinate + ADP + phosphate + 2 H(+)</text>
        <dbReference type="Rhea" id="RHEA:22628"/>
        <dbReference type="ChEBI" id="CHEBI:15378"/>
        <dbReference type="ChEBI" id="CHEBI:29991"/>
        <dbReference type="ChEBI" id="CHEBI:30616"/>
        <dbReference type="ChEBI" id="CHEBI:43474"/>
        <dbReference type="ChEBI" id="CHEBI:58443"/>
        <dbReference type="ChEBI" id="CHEBI:77657"/>
        <dbReference type="ChEBI" id="CHEBI:456216"/>
        <dbReference type="EC" id="6.3.2.6"/>
    </reaction>
</comment>
<comment type="pathway">
    <text evidence="1">Purine metabolism; IMP biosynthesis via de novo pathway; 5-amino-1-(5-phospho-D-ribosyl)imidazole-4-carboxamide from 5-amino-1-(5-phospho-D-ribosyl)imidazole-4-carboxylate: step 1/2.</text>
</comment>
<comment type="similarity">
    <text evidence="1">Belongs to the SAICAR synthetase family.</text>
</comment>
<proteinExistence type="inferred from homology"/>
<reference key="1">
    <citation type="submission" date="2005-03" db="EMBL/GenBank/DDBJ databases">
        <title>Brevibacillus brevis strain 47, complete genome.</title>
        <authorList>
            <person name="Hosoyama A."/>
            <person name="Yamada R."/>
            <person name="Hongo Y."/>
            <person name="Terui Y."/>
            <person name="Ankai A."/>
            <person name="Masuyama W."/>
            <person name="Sekiguchi M."/>
            <person name="Takeda T."/>
            <person name="Asano K."/>
            <person name="Ohji S."/>
            <person name="Ichikawa N."/>
            <person name="Narita S."/>
            <person name="Aoki N."/>
            <person name="Miura H."/>
            <person name="Matsushita S."/>
            <person name="Sekigawa T."/>
            <person name="Yamagata H."/>
            <person name="Yoshikawa H."/>
            <person name="Udaka S."/>
            <person name="Tanikawa S."/>
            <person name="Fujita N."/>
        </authorList>
    </citation>
    <scope>NUCLEOTIDE SEQUENCE [LARGE SCALE GENOMIC DNA]</scope>
    <source>
        <strain>47 / JCM 6285 / NBRC 100599</strain>
    </source>
</reference>
<sequence>MEKQEQLYEGKAKRIYRTSLPDQYWVEYKDDATAFNGEKRAQITGKGELNNRITAIFFTMLKERGIDNHFVRLLSATEQVVRKVEIIPLEVVVRNIAAGSLAKRLGMEEGTVLPQPVVEFYYKDDALGDPLVNASHIKVLGIASESDQATLERMGLAVNEVLVPYLRERNITLVDFKLEFGKTADGEILLADEISPDTCRFWDSVTNEKLDKDRFRRDLGNVEEAYKEMLTRLGGDVHV</sequence>
<feature type="chain" id="PRO_1000122905" description="Phosphoribosylaminoimidazole-succinocarboxamide synthase">
    <location>
        <begin position="1"/>
        <end position="239"/>
    </location>
</feature>
<gene>
    <name evidence="1" type="primary">purC</name>
    <name type="ordered locus">BBR47_05970</name>
</gene>
<dbReference type="EC" id="6.3.2.6" evidence="1"/>
<dbReference type="EMBL" id="AP008955">
    <property type="protein sequence ID" value="BAH41574.1"/>
    <property type="molecule type" value="Genomic_DNA"/>
</dbReference>
<dbReference type="RefSeq" id="WP_012684340.1">
    <property type="nucleotide sequence ID" value="NC_012491.1"/>
</dbReference>
<dbReference type="SMR" id="C0ZKC3"/>
<dbReference type="STRING" id="358681.BBR47_05970"/>
<dbReference type="GeneID" id="87587436"/>
<dbReference type="KEGG" id="bbe:BBR47_05970"/>
<dbReference type="eggNOG" id="COG0152">
    <property type="taxonomic scope" value="Bacteria"/>
</dbReference>
<dbReference type="HOGENOM" id="CLU_061495_2_0_9"/>
<dbReference type="UniPathway" id="UPA00074">
    <property type="reaction ID" value="UER00131"/>
</dbReference>
<dbReference type="Proteomes" id="UP000001877">
    <property type="component" value="Chromosome"/>
</dbReference>
<dbReference type="GO" id="GO:0005524">
    <property type="term" value="F:ATP binding"/>
    <property type="evidence" value="ECO:0007669"/>
    <property type="project" value="UniProtKB-KW"/>
</dbReference>
<dbReference type="GO" id="GO:0004639">
    <property type="term" value="F:phosphoribosylaminoimidazolesuccinocarboxamide synthase activity"/>
    <property type="evidence" value="ECO:0007669"/>
    <property type="project" value="UniProtKB-UniRule"/>
</dbReference>
<dbReference type="GO" id="GO:0006189">
    <property type="term" value="P:'de novo' IMP biosynthetic process"/>
    <property type="evidence" value="ECO:0007669"/>
    <property type="project" value="UniProtKB-UniRule"/>
</dbReference>
<dbReference type="GO" id="GO:0009236">
    <property type="term" value="P:cobalamin biosynthetic process"/>
    <property type="evidence" value="ECO:0007669"/>
    <property type="project" value="InterPro"/>
</dbReference>
<dbReference type="CDD" id="cd01415">
    <property type="entry name" value="SAICAR_synt_PurC"/>
    <property type="match status" value="1"/>
</dbReference>
<dbReference type="FunFam" id="3.30.470.20:FF:000006">
    <property type="entry name" value="Phosphoribosylaminoimidazole-succinocarboxamide synthase"/>
    <property type="match status" value="1"/>
</dbReference>
<dbReference type="Gene3D" id="3.30.470.20">
    <property type="entry name" value="ATP-grasp fold, B domain"/>
    <property type="match status" value="1"/>
</dbReference>
<dbReference type="Gene3D" id="3.30.200.20">
    <property type="entry name" value="Phosphorylase Kinase, domain 1"/>
    <property type="match status" value="1"/>
</dbReference>
<dbReference type="HAMAP" id="MF_00137">
    <property type="entry name" value="SAICAR_synth"/>
    <property type="match status" value="1"/>
</dbReference>
<dbReference type="InterPro" id="IPR028923">
    <property type="entry name" value="SAICAR_synt/ADE2_N"/>
</dbReference>
<dbReference type="InterPro" id="IPR033934">
    <property type="entry name" value="SAICAR_synt_PurC"/>
</dbReference>
<dbReference type="InterPro" id="IPR001636">
    <property type="entry name" value="SAICAR_synth"/>
</dbReference>
<dbReference type="InterPro" id="IPR050089">
    <property type="entry name" value="SAICAR_synthetase"/>
</dbReference>
<dbReference type="InterPro" id="IPR018236">
    <property type="entry name" value="SAICAR_synthetase_CS"/>
</dbReference>
<dbReference type="NCBIfam" id="TIGR00081">
    <property type="entry name" value="purC"/>
    <property type="match status" value="1"/>
</dbReference>
<dbReference type="PANTHER" id="PTHR43599">
    <property type="entry name" value="MULTIFUNCTIONAL PROTEIN ADE2"/>
    <property type="match status" value="1"/>
</dbReference>
<dbReference type="PANTHER" id="PTHR43599:SF3">
    <property type="entry name" value="SI:DKEY-6E2.2"/>
    <property type="match status" value="1"/>
</dbReference>
<dbReference type="Pfam" id="PF01259">
    <property type="entry name" value="SAICAR_synt"/>
    <property type="match status" value="1"/>
</dbReference>
<dbReference type="SUPFAM" id="SSF56104">
    <property type="entry name" value="SAICAR synthase-like"/>
    <property type="match status" value="1"/>
</dbReference>
<dbReference type="PROSITE" id="PS01057">
    <property type="entry name" value="SAICAR_SYNTHETASE_1"/>
    <property type="match status" value="1"/>
</dbReference>
<dbReference type="PROSITE" id="PS01058">
    <property type="entry name" value="SAICAR_SYNTHETASE_2"/>
    <property type="match status" value="1"/>
</dbReference>
<name>PUR7_BREBN</name>
<evidence type="ECO:0000255" key="1">
    <source>
        <dbReference type="HAMAP-Rule" id="MF_00137"/>
    </source>
</evidence>
<organism>
    <name type="scientific">Brevibacillus brevis (strain 47 / JCM 6285 / NBRC 100599)</name>
    <dbReference type="NCBI Taxonomy" id="358681"/>
    <lineage>
        <taxon>Bacteria</taxon>
        <taxon>Bacillati</taxon>
        <taxon>Bacillota</taxon>
        <taxon>Bacilli</taxon>
        <taxon>Bacillales</taxon>
        <taxon>Paenibacillaceae</taxon>
        <taxon>Brevibacillus</taxon>
    </lineage>
</organism>
<protein>
    <recommendedName>
        <fullName evidence="1">Phosphoribosylaminoimidazole-succinocarboxamide synthase</fullName>
        <ecNumber evidence="1">6.3.2.6</ecNumber>
    </recommendedName>
    <alternativeName>
        <fullName evidence="1">SAICAR synthetase</fullName>
    </alternativeName>
</protein>